<name>RK16_ANEMR</name>
<sequence>MPSPKRTKFRKQHRGRLKGIATRSNSICFGKFALQALEPAWITARQIEAGRRAITRYARRGGKLWIRIFPDKPITARPAETRMGSGKGSPEYWVAIAKPGKILYEIGGVSENVAEAAMKIAAYKMPIRTAFIGININ</sequence>
<proteinExistence type="inferred from homology"/>
<accession>B0YPR3</accession>
<feature type="chain" id="PRO_0000354613" description="Large ribosomal subunit protein uL16c">
    <location>
        <begin position="1"/>
        <end position="137"/>
    </location>
</feature>
<geneLocation type="non-photosynthetic plastid"/>
<reference key="1">
    <citation type="journal article" date="2008" name="Mol. Biol. Evol.">
        <title>Functional gene losses occur with minimal size reduction in the plastid genome of the parasitic liverwort Aneura mirabilis.</title>
        <authorList>
            <person name="Wickett N.J."/>
            <person name="Zhang Y."/>
            <person name="Hansen S.K."/>
            <person name="Roper J.M."/>
            <person name="Kuehl J.V."/>
            <person name="Plock S.A."/>
            <person name="Wolf P.G."/>
            <person name="dePamphilis C.W."/>
            <person name="Boore J.L."/>
            <person name="Goffinet B."/>
        </authorList>
    </citation>
    <scope>NUCLEOTIDE SEQUENCE [LARGE SCALE GENOMIC DNA]</scope>
</reference>
<evidence type="ECO:0000255" key="1">
    <source>
        <dbReference type="HAMAP-Rule" id="MF_01342"/>
    </source>
</evidence>
<evidence type="ECO:0000305" key="2"/>
<protein>
    <recommendedName>
        <fullName evidence="1">Large ribosomal subunit protein uL16c</fullName>
    </recommendedName>
    <alternativeName>
        <fullName evidence="2">50S ribosomal protein L16, plastid</fullName>
    </alternativeName>
</protein>
<comment type="subunit">
    <text evidence="1">Part of the 50S ribosomal subunit.</text>
</comment>
<comment type="subcellular location">
    <subcellularLocation>
        <location>Plastid</location>
    </subcellularLocation>
</comment>
<comment type="similarity">
    <text evidence="1">Belongs to the universal ribosomal protein uL16 family.</text>
</comment>
<keyword id="KW-0934">Plastid</keyword>
<keyword id="KW-0687">Ribonucleoprotein</keyword>
<keyword id="KW-0689">Ribosomal protein</keyword>
<dbReference type="EMBL" id="EU043314">
    <property type="protein sequence ID" value="ABS54511.1"/>
    <property type="molecule type" value="Genomic_DNA"/>
</dbReference>
<dbReference type="RefSeq" id="YP_001687249.1">
    <property type="nucleotide sequence ID" value="NC_010359.1"/>
</dbReference>
<dbReference type="SMR" id="B0YPR3"/>
<dbReference type="GeneID" id="5952114"/>
<dbReference type="GO" id="GO:0005762">
    <property type="term" value="C:mitochondrial large ribosomal subunit"/>
    <property type="evidence" value="ECO:0007669"/>
    <property type="project" value="TreeGrafter"/>
</dbReference>
<dbReference type="GO" id="GO:0009536">
    <property type="term" value="C:plastid"/>
    <property type="evidence" value="ECO:0007669"/>
    <property type="project" value="UniProtKB-SubCell"/>
</dbReference>
<dbReference type="GO" id="GO:0019843">
    <property type="term" value="F:rRNA binding"/>
    <property type="evidence" value="ECO:0007669"/>
    <property type="project" value="InterPro"/>
</dbReference>
<dbReference type="GO" id="GO:0003735">
    <property type="term" value="F:structural constituent of ribosome"/>
    <property type="evidence" value="ECO:0007669"/>
    <property type="project" value="InterPro"/>
</dbReference>
<dbReference type="GO" id="GO:0032543">
    <property type="term" value="P:mitochondrial translation"/>
    <property type="evidence" value="ECO:0007669"/>
    <property type="project" value="TreeGrafter"/>
</dbReference>
<dbReference type="CDD" id="cd01433">
    <property type="entry name" value="Ribosomal_L16_L10e"/>
    <property type="match status" value="1"/>
</dbReference>
<dbReference type="FunFam" id="3.90.1170.10:FF:000001">
    <property type="entry name" value="50S ribosomal protein L16"/>
    <property type="match status" value="1"/>
</dbReference>
<dbReference type="Gene3D" id="3.90.1170.10">
    <property type="entry name" value="Ribosomal protein L10e/L16"/>
    <property type="match status" value="1"/>
</dbReference>
<dbReference type="HAMAP" id="MF_01342">
    <property type="entry name" value="Ribosomal_uL16"/>
    <property type="match status" value="1"/>
</dbReference>
<dbReference type="InterPro" id="IPR047873">
    <property type="entry name" value="Ribosomal_uL16"/>
</dbReference>
<dbReference type="InterPro" id="IPR000114">
    <property type="entry name" value="Ribosomal_uL16_bact-type"/>
</dbReference>
<dbReference type="InterPro" id="IPR020798">
    <property type="entry name" value="Ribosomal_uL16_CS"/>
</dbReference>
<dbReference type="InterPro" id="IPR016180">
    <property type="entry name" value="Ribosomal_uL16_dom"/>
</dbReference>
<dbReference type="InterPro" id="IPR036920">
    <property type="entry name" value="Ribosomal_uL16_sf"/>
</dbReference>
<dbReference type="NCBIfam" id="TIGR01164">
    <property type="entry name" value="rplP_bact"/>
    <property type="match status" value="1"/>
</dbReference>
<dbReference type="PANTHER" id="PTHR12220">
    <property type="entry name" value="50S/60S RIBOSOMAL PROTEIN L16"/>
    <property type="match status" value="1"/>
</dbReference>
<dbReference type="PANTHER" id="PTHR12220:SF13">
    <property type="entry name" value="LARGE RIBOSOMAL SUBUNIT PROTEIN UL16M"/>
    <property type="match status" value="1"/>
</dbReference>
<dbReference type="Pfam" id="PF00252">
    <property type="entry name" value="Ribosomal_L16"/>
    <property type="match status" value="1"/>
</dbReference>
<dbReference type="PRINTS" id="PR00060">
    <property type="entry name" value="RIBOSOMALL16"/>
</dbReference>
<dbReference type="SUPFAM" id="SSF54686">
    <property type="entry name" value="Ribosomal protein L16p/L10e"/>
    <property type="match status" value="1"/>
</dbReference>
<dbReference type="PROSITE" id="PS00586">
    <property type="entry name" value="RIBOSOMAL_L16_1"/>
    <property type="match status" value="1"/>
</dbReference>
<dbReference type="PROSITE" id="PS00701">
    <property type="entry name" value="RIBOSOMAL_L16_2"/>
    <property type="match status" value="1"/>
</dbReference>
<gene>
    <name evidence="1" type="primary">rpl16</name>
</gene>
<organism>
    <name type="scientific">Aneura mirabilis</name>
    <name type="common">Parasitic liverwort</name>
    <name type="synonym">Cryptothallus mirabilis</name>
    <dbReference type="NCBI Taxonomy" id="280810"/>
    <lineage>
        <taxon>Eukaryota</taxon>
        <taxon>Viridiplantae</taxon>
        <taxon>Streptophyta</taxon>
        <taxon>Embryophyta</taxon>
        <taxon>Marchantiophyta</taxon>
        <taxon>Jungermanniopsida</taxon>
        <taxon>Metzgeriidae</taxon>
        <taxon>Metzgeriales</taxon>
        <taxon>Aneuraceae</taxon>
        <taxon>Aneura</taxon>
    </lineage>
</organism>